<organism>
    <name type="scientific">Lawsonia intracellularis (strain PHE/MN1-00)</name>
    <dbReference type="NCBI Taxonomy" id="363253"/>
    <lineage>
        <taxon>Bacteria</taxon>
        <taxon>Pseudomonadati</taxon>
        <taxon>Thermodesulfobacteriota</taxon>
        <taxon>Desulfovibrionia</taxon>
        <taxon>Desulfovibrionales</taxon>
        <taxon>Desulfovibrionaceae</taxon>
        <taxon>Lawsonia</taxon>
    </lineage>
</organism>
<dbReference type="EC" id="2.7.7.8" evidence="1"/>
<dbReference type="EMBL" id="AM180252">
    <property type="protein sequence ID" value="CAJ55060.1"/>
    <property type="molecule type" value="Genomic_DNA"/>
</dbReference>
<dbReference type="RefSeq" id="WP_011527089.1">
    <property type="nucleotide sequence ID" value="NC_008011.1"/>
</dbReference>
<dbReference type="SMR" id="Q1MPL7"/>
<dbReference type="STRING" id="363253.LI1006"/>
<dbReference type="KEGG" id="lip:LI1006"/>
<dbReference type="eggNOG" id="COG1185">
    <property type="taxonomic scope" value="Bacteria"/>
</dbReference>
<dbReference type="HOGENOM" id="CLU_004217_2_2_7"/>
<dbReference type="OrthoDB" id="9804305at2"/>
<dbReference type="Proteomes" id="UP000002430">
    <property type="component" value="Chromosome"/>
</dbReference>
<dbReference type="GO" id="GO:0005829">
    <property type="term" value="C:cytosol"/>
    <property type="evidence" value="ECO:0007669"/>
    <property type="project" value="TreeGrafter"/>
</dbReference>
<dbReference type="GO" id="GO:0000175">
    <property type="term" value="F:3'-5'-RNA exonuclease activity"/>
    <property type="evidence" value="ECO:0007669"/>
    <property type="project" value="TreeGrafter"/>
</dbReference>
<dbReference type="GO" id="GO:0000287">
    <property type="term" value="F:magnesium ion binding"/>
    <property type="evidence" value="ECO:0007669"/>
    <property type="project" value="UniProtKB-UniRule"/>
</dbReference>
<dbReference type="GO" id="GO:0004654">
    <property type="term" value="F:polyribonucleotide nucleotidyltransferase activity"/>
    <property type="evidence" value="ECO:0007669"/>
    <property type="project" value="UniProtKB-UniRule"/>
</dbReference>
<dbReference type="GO" id="GO:0003723">
    <property type="term" value="F:RNA binding"/>
    <property type="evidence" value="ECO:0007669"/>
    <property type="project" value="UniProtKB-UniRule"/>
</dbReference>
<dbReference type="GO" id="GO:0006402">
    <property type="term" value="P:mRNA catabolic process"/>
    <property type="evidence" value="ECO:0007669"/>
    <property type="project" value="UniProtKB-UniRule"/>
</dbReference>
<dbReference type="GO" id="GO:0006396">
    <property type="term" value="P:RNA processing"/>
    <property type="evidence" value="ECO:0007669"/>
    <property type="project" value="InterPro"/>
</dbReference>
<dbReference type="CDD" id="cd02393">
    <property type="entry name" value="KH-I_PNPase"/>
    <property type="match status" value="1"/>
</dbReference>
<dbReference type="CDD" id="cd11363">
    <property type="entry name" value="RNase_PH_PNPase_1"/>
    <property type="match status" value="1"/>
</dbReference>
<dbReference type="CDD" id="cd11364">
    <property type="entry name" value="RNase_PH_PNPase_2"/>
    <property type="match status" value="1"/>
</dbReference>
<dbReference type="FunFam" id="3.30.1370.10:FF:000001">
    <property type="entry name" value="Polyribonucleotide nucleotidyltransferase"/>
    <property type="match status" value="1"/>
</dbReference>
<dbReference type="FunFam" id="3.30.230.70:FF:000001">
    <property type="entry name" value="Polyribonucleotide nucleotidyltransferase"/>
    <property type="match status" value="1"/>
</dbReference>
<dbReference type="FunFam" id="3.30.230.70:FF:000002">
    <property type="entry name" value="Polyribonucleotide nucleotidyltransferase"/>
    <property type="match status" value="1"/>
</dbReference>
<dbReference type="Gene3D" id="3.30.230.70">
    <property type="entry name" value="GHMP Kinase, N-terminal domain"/>
    <property type="match status" value="2"/>
</dbReference>
<dbReference type="Gene3D" id="3.30.1370.10">
    <property type="entry name" value="K Homology domain, type 1"/>
    <property type="match status" value="1"/>
</dbReference>
<dbReference type="Gene3D" id="2.40.50.140">
    <property type="entry name" value="Nucleic acid-binding proteins"/>
    <property type="match status" value="1"/>
</dbReference>
<dbReference type="HAMAP" id="MF_01595">
    <property type="entry name" value="PNPase"/>
    <property type="match status" value="1"/>
</dbReference>
<dbReference type="InterPro" id="IPR001247">
    <property type="entry name" value="ExoRNase_PH_dom1"/>
</dbReference>
<dbReference type="InterPro" id="IPR015847">
    <property type="entry name" value="ExoRNase_PH_dom2"/>
</dbReference>
<dbReference type="InterPro" id="IPR036345">
    <property type="entry name" value="ExoRNase_PH_dom2_sf"/>
</dbReference>
<dbReference type="InterPro" id="IPR004087">
    <property type="entry name" value="KH_dom"/>
</dbReference>
<dbReference type="InterPro" id="IPR004088">
    <property type="entry name" value="KH_dom_type_1"/>
</dbReference>
<dbReference type="InterPro" id="IPR036612">
    <property type="entry name" value="KH_dom_type_1_sf"/>
</dbReference>
<dbReference type="InterPro" id="IPR012340">
    <property type="entry name" value="NA-bd_OB-fold"/>
</dbReference>
<dbReference type="InterPro" id="IPR012162">
    <property type="entry name" value="PNPase"/>
</dbReference>
<dbReference type="InterPro" id="IPR027408">
    <property type="entry name" value="PNPase/RNase_PH_dom_sf"/>
</dbReference>
<dbReference type="InterPro" id="IPR015848">
    <property type="entry name" value="PNPase_PH_RNA-bd_bac/org-type"/>
</dbReference>
<dbReference type="InterPro" id="IPR020568">
    <property type="entry name" value="Ribosomal_Su5_D2-typ_SF"/>
</dbReference>
<dbReference type="InterPro" id="IPR003029">
    <property type="entry name" value="S1_domain"/>
</dbReference>
<dbReference type="NCBIfam" id="TIGR03591">
    <property type="entry name" value="polynuc_phos"/>
    <property type="match status" value="1"/>
</dbReference>
<dbReference type="NCBIfam" id="NF008805">
    <property type="entry name" value="PRK11824.1"/>
    <property type="match status" value="1"/>
</dbReference>
<dbReference type="PANTHER" id="PTHR11252">
    <property type="entry name" value="POLYRIBONUCLEOTIDE NUCLEOTIDYLTRANSFERASE"/>
    <property type="match status" value="1"/>
</dbReference>
<dbReference type="PANTHER" id="PTHR11252:SF0">
    <property type="entry name" value="POLYRIBONUCLEOTIDE NUCLEOTIDYLTRANSFERASE 1, MITOCHONDRIAL"/>
    <property type="match status" value="1"/>
</dbReference>
<dbReference type="Pfam" id="PF00013">
    <property type="entry name" value="KH_1"/>
    <property type="match status" value="1"/>
</dbReference>
<dbReference type="Pfam" id="PF03726">
    <property type="entry name" value="PNPase"/>
    <property type="match status" value="1"/>
</dbReference>
<dbReference type="Pfam" id="PF01138">
    <property type="entry name" value="RNase_PH"/>
    <property type="match status" value="2"/>
</dbReference>
<dbReference type="Pfam" id="PF03725">
    <property type="entry name" value="RNase_PH_C"/>
    <property type="match status" value="2"/>
</dbReference>
<dbReference type="Pfam" id="PF00575">
    <property type="entry name" value="S1"/>
    <property type="match status" value="1"/>
</dbReference>
<dbReference type="PIRSF" id="PIRSF005499">
    <property type="entry name" value="PNPase"/>
    <property type="match status" value="1"/>
</dbReference>
<dbReference type="SMART" id="SM00322">
    <property type="entry name" value="KH"/>
    <property type="match status" value="1"/>
</dbReference>
<dbReference type="SMART" id="SM00316">
    <property type="entry name" value="S1"/>
    <property type="match status" value="1"/>
</dbReference>
<dbReference type="SUPFAM" id="SSF54791">
    <property type="entry name" value="Eukaryotic type KH-domain (KH-domain type I)"/>
    <property type="match status" value="1"/>
</dbReference>
<dbReference type="SUPFAM" id="SSF50249">
    <property type="entry name" value="Nucleic acid-binding proteins"/>
    <property type="match status" value="1"/>
</dbReference>
<dbReference type="SUPFAM" id="SSF55666">
    <property type="entry name" value="Ribonuclease PH domain 2-like"/>
    <property type="match status" value="2"/>
</dbReference>
<dbReference type="SUPFAM" id="SSF54211">
    <property type="entry name" value="Ribosomal protein S5 domain 2-like"/>
    <property type="match status" value="2"/>
</dbReference>
<dbReference type="PROSITE" id="PS50084">
    <property type="entry name" value="KH_TYPE_1"/>
    <property type="match status" value="1"/>
</dbReference>
<dbReference type="PROSITE" id="PS50126">
    <property type="entry name" value="S1"/>
    <property type="match status" value="1"/>
</dbReference>
<sequence length="736" mass="80945">MSFRKPPIRLATQVGGKEIIFETGYMATQANGSLTVQCGGTIVLVTVCSQPLESDKGFFPLTVEYSEKMYAAGRIPGSFFRREIGRPSERETLISRLIDRPIRPMFPKGLAEDVQILANVISSDQENESDILAVTGASAAVMLSSLPFECAIAAGRIGRLNGQFVLNPTINEIELSDLNIVFAASSEAVVMVEGEANVVEEEIIIEALEWGHKEIQPIITLQNKIQELAGRNKIPFVPVEENIVFSKKVEELADKFGIVEAMQVKEKQFRKEARKAVKEKVLAILKEDPLYAEHSDILNTVSEIIGNLEKKIVRQRIVKENLRIDGRDTITVRPIAIEVGLLPRTHGSALFTRGETQSLCITTLGSSTDNQRVDSLAGDTVKNFMLHYNFPPFSVGEVKPVRVSRREIGHGALAEKALKYILPSQNTFPFTVRIVAETLESNGSSSMAAICGGCLSLMDAGVPISAPVAGVAMGLIKEDDQFIVLTDIIGDEDAFGDMDFKIAGTTKGITAVQMDIKITGLTTDVMRKAMEQAREARIHILSEMAKALDVPRSNLSQYAPQHAELVVNPDAIRMIIGPGGKNIKQITTVTGAAIDINDSGKISIFAPTSEAMEQAKQMILYYDQRPELGKNYKGKVRKILEIGAILEIMPNVEAFVHISQLAVEHIAQVTDVVQLGEDMIIKVIEITGDRVRASRKAVLLEEEGITWTPEESSRFSKGNRNGDRSRHNNRERTRRT</sequence>
<protein>
    <recommendedName>
        <fullName evidence="1">Polyribonucleotide nucleotidyltransferase</fullName>
        <ecNumber evidence="1">2.7.7.8</ecNumber>
    </recommendedName>
    <alternativeName>
        <fullName evidence="1">Polynucleotide phosphorylase</fullName>
        <shortName evidence="1">PNPase</shortName>
    </alternativeName>
</protein>
<proteinExistence type="inferred from homology"/>
<comment type="function">
    <text evidence="1">Involved in mRNA degradation. Catalyzes the phosphorolysis of single-stranded polyribonucleotides processively in the 3'- to 5'-direction.</text>
</comment>
<comment type="catalytic activity">
    <reaction evidence="1">
        <text>RNA(n+1) + phosphate = RNA(n) + a ribonucleoside 5'-diphosphate</text>
        <dbReference type="Rhea" id="RHEA:22096"/>
        <dbReference type="Rhea" id="RHEA-COMP:14527"/>
        <dbReference type="Rhea" id="RHEA-COMP:17342"/>
        <dbReference type="ChEBI" id="CHEBI:43474"/>
        <dbReference type="ChEBI" id="CHEBI:57930"/>
        <dbReference type="ChEBI" id="CHEBI:140395"/>
        <dbReference type="EC" id="2.7.7.8"/>
    </reaction>
</comment>
<comment type="cofactor">
    <cofactor evidence="1">
        <name>Mg(2+)</name>
        <dbReference type="ChEBI" id="CHEBI:18420"/>
    </cofactor>
</comment>
<comment type="subcellular location">
    <subcellularLocation>
        <location evidence="1">Cytoplasm</location>
    </subcellularLocation>
</comment>
<comment type="similarity">
    <text evidence="1">Belongs to the polyribonucleotide nucleotidyltransferase family.</text>
</comment>
<keyword id="KW-0963">Cytoplasm</keyword>
<keyword id="KW-0460">Magnesium</keyword>
<keyword id="KW-0479">Metal-binding</keyword>
<keyword id="KW-0548">Nucleotidyltransferase</keyword>
<keyword id="KW-1185">Reference proteome</keyword>
<keyword id="KW-0694">RNA-binding</keyword>
<keyword id="KW-0808">Transferase</keyword>
<gene>
    <name evidence="1" type="primary">pnp</name>
    <name type="ordered locus">LI1006</name>
</gene>
<feature type="chain" id="PRO_0000329691" description="Polyribonucleotide nucleotidyltransferase">
    <location>
        <begin position="1"/>
        <end position="736"/>
    </location>
</feature>
<feature type="domain" description="KH" evidence="1">
    <location>
        <begin position="560"/>
        <end position="619"/>
    </location>
</feature>
<feature type="domain" description="S1 motif" evidence="1">
    <location>
        <begin position="629"/>
        <end position="703"/>
    </location>
</feature>
<feature type="region of interest" description="Disordered" evidence="2">
    <location>
        <begin position="710"/>
        <end position="736"/>
    </location>
</feature>
<feature type="compositionally biased region" description="Basic and acidic residues" evidence="2">
    <location>
        <begin position="720"/>
        <end position="736"/>
    </location>
</feature>
<feature type="binding site" evidence="1">
    <location>
        <position position="493"/>
    </location>
    <ligand>
        <name>Mg(2+)</name>
        <dbReference type="ChEBI" id="CHEBI:18420"/>
    </ligand>
</feature>
<feature type="binding site" evidence="1">
    <location>
        <position position="499"/>
    </location>
    <ligand>
        <name>Mg(2+)</name>
        <dbReference type="ChEBI" id="CHEBI:18420"/>
    </ligand>
</feature>
<evidence type="ECO:0000255" key="1">
    <source>
        <dbReference type="HAMAP-Rule" id="MF_01595"/>
    </source>
</evidence>
<evidence type="ECO:0000256" key="2">
    <source>
        <dbReference type="SAM" id="MobiDB-lite"/>
    </source>
</evidence>
<reference key="1">
    <citation type="submission" date="2005-11" db="EMBL/GenBank/DDBJ databases">
        <title>The complete genome sequence of Lawsonia intracellularis: the causative agent of proliferative enteropathy.</title>
        <authorList>
            <person name="Kaur K."/>
            <person name="Zhang Q."/>
            <person name="Beckler D."/>
            <person name="Munir S."/>
            <person name="Li L."/>
            <person name="Kinsley K."/>
            <person name="Herron L."/>
            <person name="Peterson A."/>
            <person name="May B."/>
            <person name="Singh S."/>
            <person name="Gebhart C."/>
            <person name="Kapur V."/>
        </authorList>
    </citation>
    <scope>NUCLEOTIDE SEQUENCE [LARGE SCALE GENOMIC DNA]</scope>
    <source>
        <strain>PHE/MN1-00</strain>
    </source>
</reference>
<accession>Q1MPL7</accession>
<name>PNP_LAWIP</name>